<organism>
    <name type="scientific">Clostridium botulinum (strain Loch Maree / Type A3)</name>
    <dbReference type="NCBI Taxonomy" id="498214"/>
    <lineage>
        <taxon>Bacteria</taxon>
        <taxon>Bacillati</taxon>
        <taxon>Bacillota</taxon>
        <taxon>Clostridia</taxon>
        <taxon>Eubacteriales</taxon>
        <taxon>Clostridiaceae</taxon>
        <taxon>Clostridium</taxon>
    </lineage>
</organism>
<proteinExistence type="inferred from homology"/>
<comment type="function">
    <text evidence="1">Catalyzes the formation of pyridoxal 5'-phosphate from ribose 5-phosphate (RBP), glyceraldehyde 3-phosphate (G3P) and ammonia. The ammonia is provided by the PdxT subunit. Can also use ribulose 5-phosphate and dihydroxyacetone phosphate as substrates, resulting from enzyme-catalyzed isomerization of RBP and G3P, respectively.</text>
</comment>
<comment type="catalytic activity">
    <reaction evidence="1">
        <text>aldehydo-D-ribose 5-phosphate + D-glyceraldehyde 3-phosphate + L-glutamine = pyridoxal 5'-phosphate + L-glutamate + phosphate + 3 H2O + H(+)</text>
        <dbReference type="Rhea" id="RHEA:31507"/>
        <dbReference type="ChEBI" id="CHEBI:15377"/>
        <dbReference type="ChEBI" id="CHEBI:15378"/>
        <dbReference type="ChEBI" id="CHEBI:29985"/>
        <dbReference type="ChEBI" id="CHEBI:43474"/>
        <dbReference type="ChEBI" id="CHEBI:58273"/>
        <dbReference type="ChEBI" id="CHEBI:58359"/>
        <dbReference type="ChEBI" id="CHEBI:59776"/>
        <dbReference type="ChEBI" id="CHEBI:597326"/>
        <dbReference type="EC" id="4.3.3.6"/>
    </reaction>
</comment>
<comment type="pathway">
    <text evidence="1">Cofactor biosynthesis; pyridoxal 5'-phosphate biosynthesis.</text>
</comment>
<comment type="subunit">
    <text evidence="1">In the presence of PdxT, forms a dodecamer of heterodimers.</text>
</comment>
<comment type="similarity">
    <text evidence="1">Belongs to the PdxS/SNZ family.</text>
</comment>
<dbReference type="EC" id="4.3.3.6" evidence="1"/>
<dbReference type="EMBL" id="CP000962">
    <property type="protein sequence ID" value="ACA55439.1"/>
    <property type="molecule type" value="Genomic_DNA"/>
</dbReference>
<dbReference type="RefSeq" id="WP_012343418.1">
    <property type="nucleotide sequence ID" value="NC_010520.1"/>
</dbReference>
<dbReference type="SMR" id="B1KYX5"/>
<dbReference type="KEGG" id="cbl:CLK_2187"/>
<dbReference type="HOGENOM" id="CLU_055352_1_0_9"/>
<dbReference type="UniPathway" id="UPA00245"/>
<dbReference type="GO" id="GO:0036381">
    <property type="term" value="F:pyridoxal 5'-phosphate synthase (glutamine hydrolysing) activity"/>
    <property type="evidence" value="ECO:0007669"/>
    <property type="project" value="UniProtKB-UniRule"/>
</dbReference>
<dbReference type="GO" id="GO:0006520">
    <property type="term" value="P:amino acid metabolic process"/>
    <property type="evidence" value="ECO:0007669"/>
    <property type="project" value="TreeGrafter"/>
</dbReference>
<dbReference type="GO" id="GO:0042823">
    <property type="term" value="P:pyridoxal phosphate biosynthetic process"/>
    <property type="evidence" value="ECO:0007669"/>
    <property type="project" value="UniProtKB-UniRule"/>
</dbReference>
<dbReference type="GO" id="GO:0008615">
    <property type="term" value="P:pyridoxine biosynthetic process"/>
    <property type="evidence" value="ECO:0007669"/>
    <property type="project" value="TreeGrafter"/>
</dbReference>
<dbReference type="CDD" id="cd04727">
    <property type="entry name" value="pdxS"/>
    <property type="match status" value="1"/>
</dbReference>
<dbReference type="FunFam" id="3.20.20.70:FF:000001">
    <property type="entry name" value="Pyridoxine biosynthesis protein PDX1"/>
    <property type="match status" value="1"/>
</dbReference>
<dbReference type="Gene3D" id="3.20.20.70">
    <property type="entry name" value="Aldolase class I"/>
    <property type="match status" value="1"/>
</dbReference>
<dbReference type="HAMAP" id="MF_01824">
    <property type="entry name" value="PdxS"/>
    <property type="match status" value="1"/>
</dbReference>
<dbReference type="InterPro" id="IPR013785">
    <property type="entry name" value="Aldolase_TIM"/>
</dbReference>
<dbReference type="InterPro" id="IPR001852">
    <property type="entry name" value="PdxS/SNZ"/>
</dbReference>
<dbReference type="InterPro" id="IPR033755">
    <property type="entry name" value="PdxS/SNZ_N"/>
</dbReference>
<dbReference type="InterPro" id="IPR011060">
    <property type="entry name" value="RibuloseP-bd_barrel"/>
</dbReference>
<dbReference type="NCBIfam" id="NF003215">
    <property type="entry name" value="PRK04180.1"/>
    <property type="match status" value="1"/>
</dbReference>
<dbReference type="NCBIfam" id="TIGR00343">
    <property type="entry name" value="pyridoxal 5'-phosphate synthase lyase subunit PdxS"/>
    <property type="match status" value="1"/>
</dbReference>
<dbReference type="PANTHER" id="PTHR31829">
    <property type="entry name" value="PYRIDOXAL 5'-PHOSPHATE SYNTHASE SUBUNIT SNZ1-RELATED"/>
    <property type="match status" value="1"/>
</dbReference>
<dbReference type="PANTHER" id="PTHR31829:SF0">
    <property type="entry name" value="PYRIDOXAL 5'-PHOSPHATE SYNTHASE SUBUNIT SNZ1-RELATED"/>
    <property type="match status" value="1"/>
</dbReference>
<dbReference type="Pfam" id="PF01680">
    <property type="entry name" value="SOR_SNZ"/>
    <property type="match status" value="1"/>
</dbReference>
<dbReference type="PIRSF" id="PIRSF029271">
    <property type="entry name" value="Pdx1"/>
    <property type="match status" value="1"/>
</dbReference>
<dbReference type="SUPFAM" id="SSF51366">
    <property type="entry name" value="Ribulose-phoshate binding barrel"/>
    <property type="match status" value="1"/>
</dbReference>
<dbReference type="PROSITE" id="PS01235">
    <property type="entry name" value="PDXS_SNZ_1"/>
    <property type="match status" value="1"/>
</dbReference>
<dbReference type="PROSITE" id="PS51129">
    <property type="entry name" value="PDXS_SNZ_2"/>
    <property type="match status" value="1"/>
</dbReference>
<sequence length="290" mass="31533">MEKRYELNKNLAQMLKDGVIMDVVNPEQAKIAEEAGAVAVMALERVPSDIRKQGGVARTSDPKMIKEIINAVSIPVMAKVRIGHFVEAQILEAIGVDYIDESEVLTPADDLFHINKKDFKVPFVCGARNLGEALRRIGEGASMIRTKGEAGTGNVVEAVRHMRTISSEMRKLQLTPKEELMTVAKEMGAPFNLIEYVAEKGRLPVINFAAGGIATPADAALMMQLGCDGIFVGSGIFKSDNPEKRAKAIVKATTYFKDPEVLAKASENLGGAMLGLEISKLETEFAERGW</sequence>
<accession>B1KYX5</accession>
<name>PDXS_CLOBM</name>
<reference key="1">
    <citation type="journal article" date="2007" name="PLoS ONE">
        <title>Analysis of the neurotoxin complex genes in Clostridium botulinum A1-A4 and B1 strains: BoNT/A3, /Ba4 and /B1 clusters are located within plasmids.</title>
        <authorList>
            <person name="Smith T.J."/>
            <person name="Hill K.K."/>
            <person name="Foley B.T."/>
            <person name="Detter J.C."/>
            <person name="Munk A.C."/>
            <person name="Bruce D.C."/>
            <person name="Doggett N.A."/>
            <person name="Smith L.A."/>
            <person name="Marks J.D."/>
            <person name="Xie G."/>
            <person name="Brettin T.S."/>
        </authorList>
    </citation>
    <scope>NUCLEOTIDE SEQUENCE [LARGE SCALE GENOMIC DNA]</scope>
    <source>
        <strain>Loch Maree / Type A3</strain>
    </source>
</reference>
<protein>
    <recommendedName>
        <fullName evidence="1">Pyridoxal 5'-phosphate synthase subunit PdxS</fullName>
        <shortName evidence="1">PLP synthase subunit PdxS</shortName>
        <ecNumber evidence="1">4.3.3.6</ecNumber>
    </recommendedName>
    <alternativeName>
        <fullName evidence="1">Pdx1</fullName>
    </alternativeName>
</protein>
<keyword id="KW-0456">Lyase</keyword>
<keyword id="KW-0663">Pyridoxal phosphate</keyword>
<keyword id="KW-0704">Schiff base</keyword>
<feature type="chain" id="PRO_1000188218" description="Pyridoxal 5'-phosphate synthase subunit PdxS">
    <location>
        <begin position="1"/>
        <end position="290"/>
    </location>
</feature>
<feature type="active site" description="Schiff-base intermediate with D-ribose 5-phosphate" evidence="1">
    <location>
        <position position="79"/>
    </location>
</feature>
<feature type="binding site" evidence="1">
    <location>
        <position position="22"/>
    </location>
    <ligand>
        <name>D-ribose 5-phosphate</name>
        <dbReference type="ChEBI" id="CHEBI:78346"/>
    </ligand>
</feature>
<feature type="binding site" evidence="1">
    <location>
        <position position="151"/>
    </location>
    <ligand>
        <name>D-ribose 5-phosphate</name>
        <dbReference type="ChEBI" id="CHEBI:78346"/>
    </ligand>
</feature>
<feature type="binding site" evidence="1">
    <location>
        <position position="163"/>
    </location>
    <ligand>
        <name>D-glyceraldehyde 3-phosphate</name>
        <dbReference type="ChEBI" id="CHEBI:59776"/>
    </ligand>
</feature>
<feature type="binding site" evidence="1">
    <location>
        <position position="212"/>
    </location>
    <ligand>
        <name>D-ribose 5-phosphate</name>
        <dbReference type="ChEBI" id="CHEBI:78346"/>
    </ligand>
</feature>
<feature type="binding site" evidence="1">
    <location>
        <begin position="233"/>
        <end position="234"/>
    </location>
    <ligand>
        <name>D-ribose 5-phosphate</name>
        <dbReference type="ChEBI" id="CHEBI:78346"/>
    </ligand>
</feature>
<gene>
    <name evidence="1" type="primary">pdxS</name>
    <name type="ordered locus">CLK_2187</name>
</gene>
<evidence type="ECO:0000255" key="1">
    <source>
        <dbReference type="HAMAP-Rule" id="MF_01824"/>
    </source>
</evidence>